<accession>Q38E83</accession>
<dbReference type="EMBL" id="CM000207">
    <property type="protein sequence ID" value="EAN76887.1"/>
    <property type="molecule type" value="Genomic_DNA"/>
</dbReference>
<dbReference type="RefSeq" id="XP_827217.1">
    <property type="nucleotide sequence ID" value="XM_822124.1"/>
</dbReference>
<dbReference type="SMR" id="Q38E83"/>
<dbReference type="PaxDb" id="5691-EAN76887"/>
<dbReference type="GeneID" id="3660606"/>
<dbReference type="KEGG" id="tbr:Tb09.211.0740"/>
<dbReference type="VEuPathDB" id="TriTrypDB:Tb927.9.9060"/>
<dbReference type="eggNOG" id="ENOG502S378">
    <property type="taxonomic scope" value="Eukaryota"/>
</dbReference>
<dbReference type="InParanoid" id="Q38E83"/>
<dbReference type="OMA" id="PFIEWNK"/>
<dbReference type="OrthoDB" id="256076at2759"/>
<dbReference type="Proteomes" id="UP000008524">
    <property type="component" value="Chromosome 9"/>
</dbReference>
<dbReference type="GO" id="GO:0003723">
    <property type="term" value="F:RNA binding"/>
    <property type="evidence" value="ECO:0007669"/>
    <property type="project" value="InterPro"/>
</dbReference>
<dbReference type="GO" id="GO:0048255">
    <property type="term" value="P:mRNA stabilization"/>
    <property type="evidence" value="ECO:0000314"/>
    <property type="project" value="UniProtKB"/>
</dbReference>
<dbReference type="GO" id="GO:0010608">
    <property type="term" value="P:post-transcriptional regulation of gene expression"/>
    <property type="evidence" value="ECO:0000314"/>
    <property type="project" value="GeneDB"/>
</dbReference>
<dbReference type="GO" id="GO:0006417">
    <property type="term" value="P:regulation of translation"/>
    <property type="evidence" value="ECO:0007669"/>
    <property type="project" value="UniProtKB-KW"/>
</dbReference>
<dbReference type="Gene3D" id="2.30.30.100">
    <property type="match status" value="1"/>
</dbReference>
<dbReference type="InterPro" id="IPR047574">
    <property type="entry name" value="AD"/>
</dbReference>
<dbReference type="InterPro" id="IPR039683">
    <property type="entry name" value="Lsm12-like"/>
</dbReference>
<dbReference type="InterPro" id="IPR047575">
    <property type="entry name" value="Sm"/>
</dbReference>
<dbReference type="PANTHER" id="PTHR13542">
    <property type="entry name" value="LSM12 HOMOLOG"/>
    <property type="match status" value="1"/>
</dbReference>
<dbReference type="PROSITE" id="PS52001">
    <property type="entry name" value="AD"/>
    <property type="match status" value="1"/>
</dbReference>
<dbReference type="PROSITE" id="PS52002">
    <property type="entry name" value="SM"/>
    <property type="match status" value="1"/>
</dbReference>
<protein>
    <recommendedName>
        <fullName evidence="5">PBP1-interacting protein LSM12</fullName>
    </recommendedName>
</protein>
<organism evidence="9">
    <name type="scientific">Trypanosoma brucei brucei (strain 927/4 GUTat10.1)</name>
    <dbReference type="NCBI Taxonomy" id="185431"/>
    <lineage>
        <taxon>Eukaryota</taxon>
        <taxon>Discoba</taxon>
        <taxon>Euglenozoa</taxon>
        <taxon>Kinetoplastea</taxon>
        <taxon>Metakinetoplastina</taxon>
        <taxon>Trypanosomatida</taxon>
        <taxon>Trypanosomatidae</taxon>
        <taxon>Trypanosoma</taxon>
    </lineage>
</organism>
<proteinExistence type="evidence at protein level"/>
<sequence>MPVCNNDSQLIGLGVSVTLADDTTVNGTVYTYNSSEGLLVLFQGFSGSNPNVKIIRTPFIKEVTALRDNEEKLPPQLEAKARLPSMQAARDRSLFKHASSQLRNAKDKRNQLLQTDDQKTPIAALDTLIKLERIYPDIHWDKDAGVIRFNQDVVVKGKPDWTSPAVVIAEGAGDISRSLMERVQKTLSKK</sequence>
<gene>
    <name evidence="5" type="primary">LSM12</name>
    <name evidence="8" type="ORF">Tb09.211.0740</name>
</gene>
<reference evidence="9" key="1">
    <citation type="journal article" date="2005" name="Science">
        <title>The genome of the African trypanosome Trypanosoma brucei.</title>
        <authorList>
            <person name="Berriman M."/>
            <person name="Ghedin E."/>
            <person name="Hertz-Fowler C."/>
            <person name="Blandin G."/>
            <person name="Renauld H."/>
            <person name="Bartholomeu D.C."/>
            <person name="Lennard N.J."/>
            <person name="Caler E."/>
            <person name="Hamlin N.E."/>
            <person name="Haas B."/>
            <person name="Bohme U."/>
            <person name="Hannick L."/>
            <person name="Aslett M.A."/>
            <person name="Shallom J."/>
            <person name="Marcello L."/>
            <person name="Hou L."/>
            <person name="Wickstead B."/>
            <person name="Alsmark U.C.M."/>
            <person name="Arrowsmith C."/>
            <person name="Atkin R.J."/>
            <person name="Barron A.J."/>
            <person name="Bringaud F."/>
            <person name="Brooks K."/>
            <person name="Carrington M."/>
            <person name="Cherevach I."/>
            <person name="Chillingworth T.J."/>
            <person name="Churcher C."/>
            <person name="Clark L.N."/>
            <person name="Corton C.H."/>
            <person name="Cronin A."/>
            <person name="Davies R.M."/>
            <person name="Doggett J."/>
            <person name="Djikeng A."/>
            <person name="Feldblyum T."/>
            <person name="Field M.C."/>
            <person name="Fraser A."/>
            <person name="Goodhead I."/>
            <person name="Hance Z."/>
            <person name="Harper D."/>
            <person name="Harris B.R."/>
            <person name="Hauser H."/>
            <person name="Hostetler J."/>
            <person name="Ivens A."/>
            <person name="Jagels K."/>
            <person name="Johnson D."/>
            <person name="Johnson J."/>
            <person name="Jones K."/>
            <person name="Kerhornou A.X."/>
            <person name="Koo H."/>
            <person name="Larke N."/>
            <person name="Landfear S."/>
            <person name="Larkin C."/>
            <person name="Leech V."/>
            <person name="Line A."/>
            <person name="Lord A."/>
            <person name="Macleod A."/>
            <person name="Mooney P.J."/>
            <person name="Moule S."/>
            <person name="Martin D.M."/>
            <person name="Morgan G.W."/>
            <person name="Mungall K."/>
            <person name="Norbertczak H."/>
            <person name="Ormond D."/>
            <person name="Pai G."/>
            <person name="Peacock C.S."/>
            <person name="Peterson J."/>
            <person name="Quail M.A."/>
            <person name="Rabbinowitsch E."/>
            <person name="Rajandream M.A."/>
            <person name="Reitter C."/>
            <person name="Salzberg S.L."/>
            <person name="Sanders M."/>
            <person name="Schobel S."/>
            <person name="Sharp S."/>
            <person name="Simmonds M."/>
            <person name="Simpson A.J."/>
            <person name="Tallon L."/>
            <person name="Turner C.M."/>
            <person name="Tait A."/>
            <person name="Tivey A.R."/>
            <person name="Van Aken S."/>
            <person name="Walker D."/>
            <person name="Wanless D."/>
            <person name="Wang S."/>
            <person name="White B."/>
            <person name="White O."/>
            <person name="Whitehead S."/>
            <person name="Woodward J."/>
            <person name="Wortman J."/>
            <person name="Adams M.D."/>
            <person name="Embley T.M."/>
            <person name="Gull K."/>
            <person name="Ullu E."/>
            <person name="Barry J.D."/>
            <person name="Fairlamb A.H."/>
            <person name="Opperdoes F."/>
            <person name="Barrell B.G."/>
            <person name="Donelson J.E."/>
            <person name="Hall N."/>
            <person name="Fraser C.M."/>
            <person name="Melville S.E."/>
            <person name="El-Sayed N.M.A."/>
        </authorList>
    </citation>
    <scope>NUCLEOTIDE SEQUENCE [LARGE SCALE GENOMIC DNA]</scope>
    <source>
        <strain evidence="9">927/4 GUTat10.1</strain>
    </source>
</reference>
<reference evidence="7" key="2">
    <citation type="journal article" date="2014" name="Nucleic Acids Res.">
        <title>Trypanosome MKT1 and the RNA-binding protein ZC3H11: interactions and potential roles in post-transcriptional regulatory networks.</title>
        <authorList>
            <person name="Singh A."/>
            <person name="Minia I."/>
            <person name="Droll D."/>
            <person name="Fadda A."/>
            <person name="Clayton C."/>
            <person name="Erben E."/>
        </authorList>
    </citation>
    <scope>FUNCTION</scope>
    <scope>INTERACTION WITH PBP1</scope>
    <scope>IDENTIFICATION BY MASS SPECTROMETRY</scope>
</reference>
<reference evidence="7" key="3">
    <citation type="journal article" date="2020" name="J. Biol. Chem.">
        <title>The RNA-associated proteins MKT1 and MKT1L form alternative PBP1-containing complexes in Trypanosoma brucei.</title>
        <authorList>
            <person name="Melo do Nascimento L."/>
            <person name="Terrao M."/>
            <person name="Marucha K.K."/>
            <person name="Liu B."/>
            <person name="Egler F."/>
            <person name="Clayton C."/>
        </authorList>
    </citation>
    <scope>IDENTIFICATION IN A COMPLEX WITH PBP1; XAC1 AND MKT1 OR MKT1L</scope>
    <scope>INTERACTION WITH PBP1</scope>
    <scope>IDENTIFICATION BY MASS SPECTROMETRY</scope>
    <source>
        <strain evidence="6">427</strain>
    </source>
</reference>
<name>LSM12_TRYB2</name>
<evidence type="ECO:0000255" key="1">
    <source>
        <dbReference type="PROSITE-ProRule" id="PRU01345"/>
    </source>
</evidence>
<evidence type="ECO:0000255" key="2">
    <source>
        <dbReference type="PROSITE-ProRule" id="PRU01346"/>
    </source>
</evidence>
<evidence type="ECO:0000269" key="3">
    <source>
    </source>
</evidence>
<evidence type="ECO:0000269" key="4">
    <source>
    </source>
</evidence>
<evidence type="ECO:0000303" key="5">
    <source>
    </source>
</evidence>
<evidence type="ECO:0000303" key="6">
    <source>
    </source>
</evidence>
<evidence type="ECO:0000305" key="7"/>
<evidence type="ECO:0000312" key="8">
    <source>
        <dbReference type="EMBL" id="EAN76887.1"/>
    </source>
</evidence>
<evidence type="ECO:0000312" key="9">
    <source>
        <dbReference type="Proteomes" id="UP000008524"/>
    </source>
</evidence>
<feature type="chain" id="PRO_0000451925" description="PBP1-interacting protein LSM12">
    <location>
        <begin position="1"/>
        <end position="190"/>
    </location>
</feature>
<feature type="domain" description="Sm" evidence="2">
    <location>
        <begin position="2"/>
        <end position="69"/>
    </location>
</feature>
<feature type="domain" description="AD" evidence="1">
    <location>
        <begin position="84"/>
        <end position="190"/>
    </location>
</feature>
<comment type="function">
    <text evidence="3">Involved in post-transcriptional regulation of gene expression.</text>
</comment>
<comment type="subunit">
    <text evidence="3 4">Forms a complex composed of at least MKT1, PBP1, XAC1 and LSM12 (PubMed:24470144). Forms a complex composed of at least MKT1L, PBP1, XAC1 and LSM12 (PubMed:32532821). Within the complex, interacts with PBP1; the interaction is direct (PubMed:24470144, PubMed:32532821).</text>
</comment>
<comment type="similarity">
    <text evidence="7">Belongs to the LSM12 family.</text>
</comment>
<keyword id="KW-1185">Reference proteome</keyword>
<keyword id="KW-0810">Translation regulation</keyword>